<organism>
    <name type="scientific">Escherichia coli (strain K12)</name>
    <dbReference type="NCBI Taxonomy" id="83333"/>
    <lineage>
        <taxon>Bacteria</taxon>
        <taxon>Pseudomonadati</taxon>
        <taxon>Pseudomonadota</taxon>
        <taxon>Gammaproteobacteria</taxon>
        <taxon>Enterobacterales</taxon>
        <taxon>Enterobacteriaceae</taxon>
        <taxon>Escherichia</taxon>
    </lineage>
</organism>
<reference key="1">
    <citation type="journal article" date="1993" name="Nucleic Acids Res.">
        <title>Analysis of the Escherichia coli genome. IV. DNA sequence of the region from 89.2 to 92.8 minutes.</title>
        <authorList>
            <person name="Blattner F.R."/>
            <person name="Burland V.D."/>
            <person name="Plunkett G. III"/>
            <person name="Sofia H.J."/>
            <person name="Daniels D.L."/>
        </authorList>
    </citation>
    <scope>NUCLEOTIDE SEQUENCE [LARGE SCALE GENOMIC DNA]</scope>
    <source>
        <strain>K12 / MG1655 / ATCC 47076</strain>
    </source>
</reference>
<reference key="2">
    <citation type="journal article" date="1997" name="Science">
        <title>The complete genome sequence of Escherichia coli K-12.</title>
        <authorList>
            <person name="Blattner F.R."/>
            <person name="Plunkett G. III"/>
            <person name="Bloch C.A."/>
            <person name="Perna N.T."/>
            <person name="Burland V."/>
            <person name="Riley M."/>
            <person name="Collado-Vides J."/>
            <person name="Glasner J.D."/>
            <person name="Rode C.K."/>
            <person name="Mayhew G.F."/>
            <person name="Gregor J."/>
            <person name="Davis N.W."/>
            <person name="Kirkpatrick H.A."/>
            <person name="Goeden M.A."/>
            <person name="Rose D.J."/>
            <person name="Mau B."/>
            <person name="Shao Y."/>
        </authorList>
    </citation>
    <scope>NUCLEOTIDE SEQUENCE [LARGE SCALE GENOMIC DNA]</scope>
    <scope>SEQUENCE REVISION TO 282</scope>
    <source>
        <strain>K12 / MG1655 / ATCC 47076</strain>
    </source>
</reference>
<reference key="3">
    <citation type="journal article" date="2006" name="Mol. Syst. Biol.">
        <title>Highly accurate genome sequences of Escherichia coli K-12 strains MG1655 and W3110.</title>
        <authorList>
            <person name="Hayashi K."/>
            <person name="Morooka N."/>
            <person name="Yamamoto Y."/>
            <person name="Fujita K."/>
            <person name="Isono K."/>
            <person name="Choi S."/>
            <person name="Ohtsubo E."/>
            <person name="Baba T."/>
            <person name="Wanner B.L."/>
            <person name="Mori H."/>
            <person name="Horiuchi T."/>
        </authorList>
    </citation>
    <scope>NUCLEOTIDE SEQUENCE [LARGE SCALE GENOMIC DNA]</scope>
    <source>
        <strain>K12 / W3110 / ATCC 27325 / DSM 5911</strain>
    </source>
</reference>
<reference key="4">
    <citation type="journal article" date="1991" name="Gene">
        <title>Primary structure of the intergenic region between aceK and iclR in the Escherichia coli chromosome.</title>
        <authorList>
            <person name="Galinier A."/>
            <person name="Bleicher F."/>
            <person name="Negre D."/>
            <person name="Perriere G."/>
            <person name="Duclos B."/>
            <person name="Cozzone A.J."/>
            <person name="Cortay J.-C."/>
        </authorList>
    </citation>
    <scope>NUCLEOTIDE SEQUENCE [GENOMIC DNA] OF 108-728</scope>
</reference>
<reference key="5">
    <citation type="journal article" date="1994" name="J. Mol. Biol.">
        <title>Detecting patterns in protein sequences.</title>
        <authorList>
            <person name="Neuwald A.F."/>
            <person name="Green P."/>
        </authorList>
    </citation>
    <scope>IDENTIFICATION OF ANKYRIN REPEATS</scope>
</reference>
<name>ARPA_ECOLI</name>
<feature type="chain" id="PRO_0000067228" description="Ankyrin repeat protein A">
    <location>
        <begin position="1"/>
        <end position="728"/>
    </location>
</feature>
<feature type="repeat" description="ANK 1" evidence="1">
    <location>
        <begin position="381"/>
        <end position="410"/>
    </location>
</feature>
<feature type="repeat" description="ANK 2" evidence="1">
    <location>
        <begin position="429"/>
        <end position="458"/>
    </location>
</feature>
<feature type="repeat" description="ANK 3" evidence="1">
    <location>
        <begin position="477"/>
        <end position="506"/>
    </location>
</feature>
<feature type="repeat" description="ANK 4" evidence="1">
    <location>
        <begin position="525"/>
        <end position="554"/>
    </location>
</feature>
<feature type="repeat" description="ANK 5" evidence="1">
    <location>
        <begin position="573"/>
        <end position="602"/>
    </location>
</feature>
<feature type="sequence conflict" description="In Ref. 4; AAA73004." evidence="2" ref="4">
    <original>N</original>
    <variation>D</variation>
    <location>
        <position position="124"/>
    </location>
</feature>
<feature type="sequence conflict" description="In Ref. 4; AAA73004." evidence="2" ref="4">
    <original>S</original>
    <variation>T</variation>
    <location>
        <position position="282"/>
    </location>
</feature>
<feature type="sequence conflict" description="In Ref. 4; AAA73004." evidence="2" ref="4">
    <original>GFTDNPRYIAEKNYMEALLKKASPHTVR</original>
    <variation>TQKSISPYRTLNLCLRRYA</variation>
    <location>
        <begin position="701"/>
        <end position="728"/>
    </location>
</feature>
<accession>P23325</accession>
<accession>P76781</accession>
<accession>Q2M6T7</accession>
<dbReference type="EMBL" id="U00006">
    <property type="protein sequence ID" value="AAC43111.1"/>
    <property type="molecule type" value="Genomic_DNA"/>
</dbReference>
<dbReference type="EMBL" id="U00096">
    <property type="protein sequence ID" value="AAC76987.1"/>
    <property type="molecule type" value="Genomic_DNA"/>
</dbReference>
<dbReference type="EMBL" id="AP009048">
    <property type="protein sequence ID" value="BAE78019.1"/>
    <property type="molecule type" value="Genomic_DNA"/>
</dbReference>
<dbReference type="EMBL" id="M63497">
    <property type="protein sequence ID" value="AAA73004.1"/>
    <property type="molecule type" value="Genomic_DNA"/>
</dbReference>
<dbReference type="PIR" id="H65208">
    <property type="entry name" value="H65208"/>
</dbReference>
<dbReference type="RefSeq" id="NP_418441.1">
    <property type="nucleotide sequence ID" value="NC_000913.3"/>
</dbReference>
<dbReference type="SMR" id="P23325"/>
<dbReference type="BioGRID" id="4262004">
    <property type="interactions" value="11"/>
</dbReference>
<dbReference type="DIP" id="DIP-9159N"/>
<dbReference type="FunCoup" id="P23325">
    <property type="interactions" value="106"/>
</dbReference>
<dbReference type="IntAct" id="P23325">
    <property type="interactions" value="10"/>
</dbReference>
<dbReference type="STRING" id="511145.b4017"/>
<dbReference type="PaxDb" id="511145-b4017"/>
<dbReference type="EnsemblBacteria" id="AAC76987">
    <property type="protein sequence ID" value="AAC76987"/>
    <property type="gene ID" value="b4017"/>
</dbReference>
<dbReference type="GeneID" id="944933"/>
<dbReference type="KEGG" id="ecj:JW3977"/>
<dbReference type="KEGG" id="eco:b4017"/>
<dbReference type="KEGG" id="ecoc:C3026_21700"/>
<dbReference type="PATRIC" id="fig|1411691.4.peg.2696"/>
<dbReference type="EchoBASE" id="EB1193"/>
<dbReference type="eggNOG" id="ENOG5032YAJ">
    <property type="taxonomic scope" value="Bacteria"/>
</dbReference>
<dbReference type="HOGENOM" id="CLU_022927_0_0_6"/>
<dbReference type="InParanoid" id="P23325"/>
<dbReference type="OMA" id="KWSNDHI"/>
<dbReference type="OrthoDB" id="9989784at2"/>
<dbReference type="BioCyc" id="EcoCyc:EG11208-MONOMER"/>
<dbReference type="PRO" id="PR:P23325"/>
<dbReference type="Proteomes" id="UP000000625">
    <property type="component" value="Chromosome"/>
</dbReference>
<dbReference type="Gene3D" id="1.25.40.20">
    <property type="entry name" value="Ankyrin repeat-containing domain"/>
    <property type="match status" value="1"/>
</dbReference>
<dbReference type="InterPro" id="IPR002110">
    <property type="entry name" value="Ankyrin_rpt"/>
</dbReference>
<dbReference type="InterPro" id="IPR036770">
    <property type="entry name" value="Ankyrin_rpt-contain_sf"/>
</dbReference>
<dbReference type="InterPro" id="IPR012927">
    <property type="entry name" value="Toxin_15_N"/>
</dbReference>
<dbReference type="PANTHER" id="PTHR24186:SF38">
    <property type="entry name" value="ANKYRIN REPEAT FAMILY PROTEIN"/>
    <property type="match status" value="1"/>
</dbReference>
<dbReference type="PANTHER" id="PTHR24186">
    <property type="entry name" value="PROTEIN PHOSPHATASE 1 REGULATORY SUBUNIT"/>
    <property type="match status" value="1"/>
</dbReference>
<dbReference type="Pfam" id="PF07906">
    <property type="entry name" value="Toxin_15"/>
    <property type="match status" value="1"/>
</dbReference>
<dbReference type="SMART" id="SM00248">
    <property type="entry name" value="ANK"/>
    <property type="match status" value="6"/>
</dbReference>
<dbReference type="SUPFAM" id="SSF48403">
    <property type="entry name" value="Ankyrin repeat"/>
    <property type="match status" value="1"/>
</dbReference>
<sequence length="728" mass="82598">MITRIPRSSFSANINNTAQTNEHQTLSELFYKELEDKFSGKELATPLLKSFSENCRQNGRHIFSNKDFVIKFSTSVLQADKKEITIINKNENTTLTQTIAPIFEKYLMEILPQRSDTLDKQELNLKSDRKEKEFPRIKLNGQCYFPGRPQNRIVCRHIAAQYINDIYQNVDYKPHQDDYSSAEKFLTHFNKKCKNQTLALVSSRPEGRCVAACGDFGLVMKAYFDKMESNGISVMAAILLVDNHALTVRLRIKNTTEGCTHYVVSVYDPNVTNDKIRIMSESKENIKHYSLMDFMNVDYSLLKWSNDHVINQSVAIIPALPKEQLLMLKGSVDEITPPLSPATMNLLMAIGQNHQLTQLMIQLQKMPELHRTEMLTAYNSINLPGLYLAINYGNADIVETIFNSLSETGYEGLLSKKNLMHILEAKDKNGFSGLFLAISRKDKNVVTSILNALPKLAATHHLDNEQVYKFLSAKNRTSSHVLYHVMANGDADMLKIVLNALPLLIRTCHLTKEQVLDLLKAKDFYGCPGLYLAMQNGHSDIVKVILEALPSLAQEINISASDIVDLLTAKSLARDTGLFMAMQRGHMNVINTIFNALPTLFNTFKFDKKNMKPLLLANNSNEYPGLFSAIQHKQQNVVETVYLALSDHARLFGFTAEDIMDFWQHKAPQKYSAFELAFEFGHRVIAELILNTLNKMAESFGFTDNPRYIAEKNYMEALLKKASPHTVR</sequence>
<keyword id="KW-0040">ANK repeat</keyword>
<keyword id="KW-1185">Reference proteome</keyword>
<keyword id="KW-0677">Repeat</keyword>
<protein>
    <recommendedName>
        <fullName>Ankyrin repeat protein A</fullName>
    </recommendedName>
    <alternativeName>
        <fullName>Ankyrin-like regulatory protein</fullName>
    </alternativeName>
</protein>
<evidence type="ECO:0000269" key="1">
    <source>
    </source>
</evidence>
<evidence type="ECO:0000305" key="2"/>
<gene>
    <name type="primary">arpA</name>
    <name type="synonym">arp</name>
    <name type="synonym">yjaC</name>
    <name type="ordered locus">b4017</name>
    <name type="ordered locus">JW3977</name>
</gene>
<proteinExistence type="inferred from homology"/>
<comment type="similarity">
    <text evidence="2">Belongs to the Toxin_15 family.</text>
</comment>